<name>SOLAP_PAEBO</name>
<keyword id="KW-0119">Carbohydrate metabolism</keyword>
<keyword id="KW-0328">Glycosyltransferase</keyword>
<keyword id="KW-0808">Transferase</keyword>
<gene>
    <name evidence="5" type="ORF">PBOR_28850</name>
</gene>
<reference key="1">
    <citation type="submission" date="2014-08" db="EMBL/GenBank/DDBJ databases">
        <title>Comparative genomics of the Paenibacillus odorifer group.</title>
        <authorList>
            <person name="den Bakker H.C."/>
            <person name="Tsai Y.-C.Y.-C."/>
            <person name="Martin N."/>
            <person name="Korlach J."/>
            <person name="Wiedmann M."/>
        </authorList>
    </citation>
    <scope>NUCLEOTIDE SEQUENCE [LARGE SCALE GENOMIC DNA]</scope>
    <source>
        <strain>DSM 13188 / CCUG 43137 / CIP 107056 / KCTC 3805 / KK19</strain>
    </source>
</reference>
<reference key="2">
    <citation type="journal article" date="2022" name="Sci. Rep.">
        <title>Discovery of solabiose phosphorylase and its application for enzymatic synthesis of solabiose from sucrose and lactose.</title>
        <authorList>
            <person name="Saburi W."/>
            <person name="Nihira T."/>
            <person name="Nakai H."/>
            <person name="Kitaoka M."/>
            <person name="Mori H."/>
        </authorList>
    </citation>
    <scope>FUNCTION</scope>
    <scope>CATALYTIC ACTIVITY</scope>
    <scope>BIOPHYSICOCHEMICAL PROPERTIES</scope>
    <scope>BIOTECHNOLOGY</scope>
    <source>
        <strain>DSM 13188 / CCUG 43137 / CIP 107056 / KCTC 3805 / KK19</strain>
    </source>
</reference>
<feature type="chain" id="PRO_0000460224" description="Solabiose phosphorylase">
    <location>
        <begin position="1"/>
        <end position="768"/>
    </location>
</feature>
<feature type="active site" description="Proton donor" evidence="1">
    <location>
        <position position="456"/>
    </location>
</feature>
<protein>
    <recommendedName>
        <fullName evidence="3">Solabiose phosphorylase</fullName>
        <ecNumber evidence="2">2.4.1.389</ecNumber>
    </recommendedName>
</protein>
<organism>
    <name type="scientific">Paenibacillus borealis</name>
    <dbReference type="NCBI Taxonomy" id="160799"/>
    <lineage>
        <taxon>Bacteria</taxon>
        <taxon>Bacillati</taxon>
        <taxon>Bacillota</taxon>
        <taxon>Bacilli</taxon>
        <taxon>Bacillales</taxon>
        <taxon>Paenibacillaceae</taxon>
        <taxon>Paenibacillus</taxon>
    </lineage>
</organism>
<proteinExistence type="evidence at protein level"/>
<comment type="function">
    <text evidence="2">Catalyzes the reversible phosphorolysis of solabiose (PubMed:34997180). Catalyzes the phosphorolysis and synthesis of solabiose through a sequential bi-bi mechanism involving the formation of a ternary complex (PubMed:34997180). Is probably involved in the metabolism of solabiose released from solabiose-containing compounds (PubMed:34997180).</text>
</comment>
<comment type="catalytic activity">
    <reaction evidence="2">
        <text>solabiose + phosphate = D-galactose + alpha-D-glucose 1-phosphate</text>
        <dbReference type="Rhea" id="RHEA:74239"/>
        <dbReference type="ChEBI" id="CHEBI:4139"/>
        <dbReference type="ChEBI" id="CHEBI:43474"/>
        <dbReference type="ChEBI" id="CHEBI:58601"/>
        <dbReference type="ChEBI" id="CHEBI:155139"/>
        <dbReference type="EC" id="2.4.1.389"/>
    </reaction>
</comment>
<comment type="biophysicochemical properties">
    <kinetics>
        <KM evidence="2">2.26 mM for solabiose</KM>
        <KM evidence="2">1.53 mM for phosphate</KM>
        <KM evidence="2">4.27 mM for alpha-D-glucose 1-phosphate</KM>
        <KM evidence="2">7.35 mM for D-galactose</KM>
        <text evidence="2">kcat is 9.14 sec(-1) for the phosphorolysis of solabiose. kcat is 14.5 sec(-1) for the synthesis of solabiose.</text>
    </kinetics>
    <phDependence>
        <text evidence="2">Optimum pH is 7.6 for phosphorolysis and 7.8 for the synthesis of solabiose.</text>
    </phDependence>
</comment>
<comment type="biotechnology">
    <text evidence="2">Is a promising biocatalyst for the efficient enzymatic synthesis of solabiose from sucrose and lactose, in combination with sucrose phosphorylase and beta-galactosidase.</text>
</comment>
<comment type="similarity">
    <text evidence="4">Belongs to the glycosyl hydrolase 94 family.</text>
</comment>
<evidence type="ECO:0000250" key="1">
    <source>
        <dbReference type="UniProtKB" id="Q76IQ9"/>
    </source>
</evidence>
<evidence type="ECO:0000269" key="2">
    <source>
    </source>
</evidence>
<evidence type="ECO:0000303" key="3">
    <source>
    </source>
</evidence>
<evidence type="ECO:0000305" key="4">
    <source>
    </source>
</evidence>
<evidence type="ECO:0000312" key="5">
    <source>
        <dbReference type="EMBL" id="AIQ60507.1"/>
    </source>
</evidence>
<accession>A0A089LI24</accession>
<sequence>MAGFGNFTENGSEFVFTGTQTPRPMLNYIWNPRILSGVNHFGGGDGAYGARSAAYIDPEGRGRSSLFRGGNRYFYIRDAETGEFWNPGWYPVKRTLDRYSCTHGLGYTRLEGAYGGIAAGARVFVNAEDPVEIWTVTLTNESPREREIKVYSFVEFSLEGYARYSEYNSYVYCDYLAEDDIIVAHNHAQERPHEWFDGFAAASVKPTGYETGKRAFLGNYGDTDSPGSVVRGACSNSLAACEDMVGVLEHTFTLKPGEEVTYHTLWGAADGNETARELTRKLLAPGRIEDDFARLLAEKTAMTEDIAVQTPLAKVNHITNMWVKQQVLLCAEAGRATGKGFRDQLQDAWAVSAFLPGLAKEKIRETLKYQYKDGKCVRGWLPLDPHIYSDGPVWIAPTVNAYLKETGDYAFLQEQVPYLDEGAGTVWEHMLTAVRYSSGDLGEHSLVLAHDGDWNDSLNGIGTGGKGESVWTSIALYHALNETAELAREVIRDEGLARELLELAVRIKEAVNANGWDGDWYLAAYNDHGEKVGSHTEQEGSIYLNSQTWAVMSGLAEGERAGQCLQAVDNKLDSPYGPLTLSPPYTEYNASIGRLTGFVPGIWENGTPYCHGGTFKIVADCVAGRGNEAFDTYSKILPDSAANPSDHSGCEPYAFTNMYFGPANPRAGETAFAWVTGTAGWMFRAVTQYMLGFYPGYDSIRIRPCIPEDWEECSMKRVYRGDTYLLTIRNKNREQCGLKRLTIDGKEIAGDVFPIFGDGLTHTVEVDM</sequence>
<dbReference type="EC" id="2.4.1.389" evidence="2"/>
<dbReference type="EMBL" id="CP009285">
    <property type="protein sequence ID" value="AIQ60507.1"/>
    <property type="molecule type" value="Genomic_DNA"/>
</dbReference>
<dbReference type="RefSeq" id="WP_042217097.1">
    <property type="nucleotide sequence ID" value="NZ_CP009285.1"/>
</dbReference>
<dbReference type="SMR" id="A0A089LI24"/>
<dbReference type="KEGG" id="pbd:PBOR_28850"/>
<dbReference type="HOGENOM" id="CLU_019054_0_0_9"/>
<dbReference type="OrthoDB" id="9769991at2"/>
<dbReference type="BioCyc" id="MetaCyc:MONOMER-22046"/>
<dbReference type="Proteomes" id="UP000029518">
    <property type="component" value="Chromosome"/>
</dbReference>
<dbReference type="GO" id="GO:0030246">
    <property type="term" value="F:carbohydrate binding"/>
    <property type="evidence" value="ECO:0007669"/>
    <property type="project" value="InterPro"/>
</dbReference>
<dbReference type="GO" id="GO:0016757">
    <property type="term" value="F:glycosyltransferase activity"/>
    <property type="evidence" value="ECO:0007669"/>
    <property type="project" value="UniProtKB-KW"/>
</dbReference>
<dbReference type="GO" id="GO:0005975">
    <property type="term" value="P:carbohydrate metabolic process"/>
    <property type="evidence" value="ECO:0007669"/>
    <property type="project" value="InterPro"/>
</dbReference>
<dbReference type="Gene3D" id="1.50.10.10">
    <property type="match status" value="1"/>
</dbReference>
<dbReference type="Gene3D" id="2.70.98.40">
    <property type="entry name" value="Glycoside hydrolase, family 65, N-terminal domain"/>
    <property type="match status" value="1"/>
</dbReference>
<dbReference type="Gene3D" id="2.60.420.10">
    <property type="entry name" value="Maltose phosphorylase, domain 3"/>
    <property type="match status" value="1"/>
</dbReference>
<dbReference type="InterPro" id="IPR008928">
    <property type="entry name" value="6-hairpin_glycosidase_sf"/>
</dbReference>
<dbReference type="InterPro" id="IPR012341">
    <property type="entry name" value="6hp_glycosidase-like_sf"/>
</dbReference>
<dbReference type="InterPro" id="IPR011013">
    <property type="entry name" value="Gal_mutarotase_sf_dom"/>
</dbReference>
<dbReference type="InterPro" id="IPR033432">
    <property type="entry name" value="GH36_catalytic"/>
</dbReference>
<dbReference type="InterPro" id="IPR052047">
    <property type="entry name" value="GH94_Enzymes"/>
</dbReference>
<dbReference type="InterPro" id="IPR037018">
    <property type="entry name" value="Glyco_hydro_65_N_sf"/>
</dbReference>
<dbReference type="InterPro" id="IPR010383">
    <property type="entry name" value="Glyco_hydrolase_94"/>
</dbReference>
<dbReference type="PANTHER" id="PTHR37469:SF2">
    <property type="entry name" value="CELLOBIONIC ACID PHOSPHORYLASE"/>
    <property type="match status" value="1"/>
</dbReference>
<dbReference type="PANTHER" id="PTHR37469">
    <property type="entry name" value="CELLOBIONIC ACID PHOSPHORYLASE-RELATED"/>
    <property type="match status" value="1"/>
</dbReference>
<dbReference type="Pfam" id="PF17167">
    <property type="entry name" value="Glyco_hydro_36"/>
    <property type="match status" value="1"/>
</dbReference>
<dbReference type="Pfam" id="PF06165">
    <property type="entry name" value="Glyco_transf_36"/>
    <property type="match status" value="1"/>
</dbReference>
<dbReference type="SUPFAM" id="SSF74650">
    <property type="entry name" value="Galactose mutarotase-like"/>
    <property type="match status" value="1"/>
</dbReference>
<dbReference type="SUPFAM" id="SSF48208">
    <property type="entry name" value="Six-hairpin glycosidases"/>
    <property type="match status" value="1"/>
</dbReference>